<name>Y7720_DICDI</name>
<reference key="1">
    <citation type="journal article" date="2002" name="Nature">
        <title>Sequence and analysis of chromosome 2 of Dictyostelium discoideum.</title>
        <authorList>
            <person name="Gloeckner G."/>
            <person name="Eichinger L."/>
            <person name="Szafranski K."/>
            <person name="Pachebat J.A."/>
            <person name="Bankier A.T."/>
            <person name="Dear P.H."/>
            <person name="Lehmann R."/>
            <person name="Baumgart C."/>
            <person name="Parra G."/>
            <person name="Abril J.F."/>
            <person name="Guigo R."/>
            <person name="Kumpf K."/>
            <person name="Tunggal B."/>
            <person name="Cox E.C."/>
            <person name="Quail M.A."/>
            <person name="Platzer M."/>
            <person name="Rosenthal A."/>
            <person name="Noegel A.A."/>
        </authorList>
    </citation>
    <scope>NUCLEOTIDE SEQUENCE [LARGE SCALE GENOMIC DNA]</scope>
    <source>
        <strain>AX4</strain>
    </source>
</reference>
<reference key="2">
    <citation type="journal article" date="2005" name="Nature">
        <title>The genome of the social amoeba Dictyostelium discoideum.</title>
        <authorList>
            <person name="Eichinger L."/>
            <person name="Pachebat J.A."/>
            <person name="Gloeckner G."/>
            <person name="Rajandream M.A."/>
            <person name="Sucgang R."/>
            <person name="Berriman M."/>
            <person name="Song J."/>
            <person name="Olsen R."/>
            <person name="Szafranski K."/>
            <person name="Xu Q."/>
            <person name="Tunggal B."/>
            <person name="Kummerfeld S."/>
            <person name="Madera M."/>
            <person name="Konfortov B.A."/>
            <person name="Rivero F."/>
            <person name="Bankier A.T."/>
            <person name="Lehmann R."/>
            <person name="Hamlin N."/>
            <person name="Davies R."/>
            <person name="Gaudet P."/>
            <person name="Fey P."/>
            <person name="Pilcher K."/>
            <person name="Chen G."/>
            <person name="Saunders D."/>
            <person name="Sodergren E.J."/>
            <person name="Davis P."/>
            <person name="Kerhornou A."/>
            <person name="Nie X."/>
            <person name="Hall N."/>
            <person name="Anjard C."/>
            <person name="Hemphill L."/>
            <person name="Bason N."/>
            <person name="Farbrother P."/>
            <person name="Desany B."/>
            <person name="Just E."/>
            <person name="Morio T."/>
            <person name="Rost R."/>
            <person name="Churcher C.M."/>
            <person name="Cooper J."/>
            <person name="Haydock S."/>
            <person name="van Driessche N."/>
            <person name="Cronin A."/>
            <person name="Goodhead I."/>
            <person name="Muzny D.M."/>
            <person name="Mourier T."/>
            <person name="Pain A."/>
            <person name="Lu M."/>
            <person name="Harper D."/>
            <person name="Lindsay R."/>
            <person name="Hauser H."/>
            <person name="James K.D."/>
            <person name="Quiles M."/>
            <person name="Madan Babu M."/>
            <person name="Saito T."/>
            <person name="Buchrieser C."/>
            <person name="Wardroper A."/>
            <person name="Felder M."/>
            <person name="Thangavelu M."/>
            <person name="Johnson D."/>
            <person name="Knights A."/>
            <person name="Loulseged H."/>
            <person name="Mungall K.L."/>
            <person name="Oliver K."/>
            <person name="Price C."/>
            <person name="Quail M.A."/>
            <person name="Urushihara H."/>
            <person name="Hernandez J."/>
            <person name="Rabbinowitsch E."/>
            <person name="Steffen D."/>
            <person name="Sanders M."/>
            <person name="Ma J."/>
            <person name="Kohara Y."/>
            <person name="Sharp S."/>
            <person name="Simmonds M.N."/>
            <person name="Spiegler S."/>
            <person name="Tivey A."/>
            <person name="Sugano S."/>
            <person name="White B."/>
            <person name="Walker D."/>
            <person name="Woodward J.R."/>
            <person name="Winckler T."/>
            <person name="Tanaka Y."/>
            <person name="Shaulsky G."/>
            <person name="Schleicher M."/>
            <person name="Weinstock G.M."/>
            <person name="Rosenthal A."/>
            <person name="Cox E.C."/>
            <person name="Chisholm R.L."/>
            <person name="Gibbs R.A."/>
            <person name="Loomis W.F."/>
            <person name="Platzer M."/>
            <person name="Kay R.R."/>
            <person name="Williams J.G."/>
            <person name="Dear P.H."/>
            <person name="Noegel A.A."/>
            <person name="Barrell B.G."/>
            <person name="Kuspa A."/>
        </authorList>
    </citation>
    <scope>NUCLEOTIDE SEQUENCE [LARGE SCALE GENOMIC DNA]</scope>
    <source>
        <strain>AX4</strain>
    </source>
</reference>
<dbReference type="EMBL" id="AAFI02000012">
    <property type="protein sequence ID" value="EAL70146.1"/>
    <property type="molecule type" value="Genomic_DNA"/>
</dbReference>
<dbReference type="RefSeq" id="XP_644102.1">
    <property type="nucleotide sequence ID" value="XM_639010.1"/>
</dbReference>
<dbReference type="PaxDb" id="44689-DDB0167720"/>
<dbReference type="EnsemblProtists" id="EAL70146">
    <property type="protein sequence ID" value="EAL70146"/>
    <property type="gene ID" value="DDB_G0274507"/>
</dbReference>
<dbReference type="GeneID" id="8619531"/>
<dbReference type="KEGG" id="ddi:DDB_G0274507"/>
<dbReference type="dictyBase" id="DDB_G0274507"/>
<dbReference type="HOGENOM" id="CLU_2692956_0_0_1"/>
<dbReference type="InParanoid" id="Q86HN0"/>
<dbReference type="PRO" id="PR:Q86HN0"/>
<dbReference type="Proteomes" id="UP000002195">
    <property type="component" value="Chromosome 2"/>
</dbReference>
<keyword id="KW-1185">Reference proteome</keyword>
<gene>
    <name type="ORF">DDB_G0274507</name>
</gene>
<sequence length="74" mass="7853">MCVCIETLKSLNSNNQGLSSNEQAFGSPSNMNESMVFGSPSSSVLSSSFKGSNSTCATNKSASSAMFSRPFYYE</sequence>
<feature type="chain" id="PRO_0000348140" description="Putative uncharacterized protein DDB_G0274507">
    <location>
        <begin position="1"/>
        <end position="74"/>
    </location>
</feature>
<accession>Q86HN0</accession>
<accession>Q555G7</accession>
<organism>
    <name type="scientific">Dictyostelium discoideum</name>
    <name type="common">Social amoeba</name>
    <dbReference type="NCBI Taxonomy" id="44689"/>
    <lineage>
        <taxon>Eukaryota</taxon>
        <taxon>Amoebozoa</taxon>
        <taxon>Evosea</taxon>
        <taxon>Eumycetozoa</taxon>
        <taxon>Dictyostelia</taxon>
        <taxon>Dictyosteliales</taxon>
        <taxon>Dictyosteliaceae</taxon>
        <taxon>Dictyostelium</taxon>
    </lineage>
</organism>
<protein>
    <recommendedName>
        <fullName>Putative uncharacterized protein DDB_G0274507</fullName>
    </recommendedName>
</protein>
<proteinExistence type="predicted"/>